<keyword id="KW-0963">Cytoplasm</keyword>
<keyword id="KW-0274">FAD</keyword>
<keyword id="KW-0285">Flavoprotein</keyword>
<keyword id="KW-0520">NAD</keyword>
<keyword id="KW-1185">Reference proteome</keyword>
<keyword id="KW-0819">tRNA processing</keyword>
<dbReference type="EMBL" id="CP001022">
    <property type="protein sequence ID" value="ACB62491.1"/>
    <property type="molecule type" value="Genomic_DNA"/>
</dbReference>
<dbReference type="RefSeq" id="WP_012371906.1">
    <property type="nucleotide sequence ID" value="NC_010556.1"/>
</dbReference>
<dbReference type="SMR" id="B1YGA7"/>
<dbReference type="STRING" id="262543.Exig_3046"/>
<dbReference type="KEGG" id="esi:Exig_3046"/>
<dbReference type="eggNOG" id="COG0445">
    <property type="taxonomic scope" value="Bacteria"/>
</dbReference>
<dbReference type="HOGENOM" id="CLU_007831_2_2_9"/>
<dbReference type="OrthoDB" id="9815560at2"/>
<dbReference type="Proteomes" id="UP000001681">
    <property type="component" value="Chromosome"/>
</dbReference>
<dbReference type="GO" id="GO:0005829">
    <property type="term" value="C:cytosol"/>
    <property type="evidence" value="ECO:0007669"/>
    <property type="project" value="TreeGrafter"/>
</dbReference>
<dbReference type="GO" id="GO:0050660">
    <property type="term" value="F:flavin adenine dinucleotide binding"/>
    <property type="evidence" value="ECO:0007669"/>
    <property type="project" value="UniProtKB-UniRule"/>
</dbReference>
<dbReference type="GO" id="GO:0030488">
    <property type="term" value="P:tRNA methylation"/>
    <property type="evidence" value="ECO:0007669"/>
    <property type="project" value="TreeGrafter"/>
</dbReference>
<dbReference type="GO" id="GO:0002098">
    <property type="term" value="P:tRNA wobble uridine modification"/>
    <property type="evidence" value="ECO:0007669"/>
    <property type="project" value="InterPro"/>
</dbReference>
<dbReference type="FunFam" id="1.10.10.1800:FF:000001">
    <property type="entry name" value="tRNA uridine 5-carboxymethylaminomethyl modification enzyme MnmG"/>
    <property type="match status" value="1"/>
</dbReference>
<dbReference type="FunFam" id="1.10.150.570:FF:000001">
    <property type="entry name" value="tRNA uridine 5-carboxymethylaminomethyl modification enzyme MnmG"/>
    <property type="match status" value="1"/>
</dbReference>
<dbReference type="FunFam" id="3.50.50.60:FF:000002">
    <property type="entry name" value="tRNA uridine 5-carboxymethylaminomethyl modification enzyme MnmG"/>
    <property type="match status" value="1"/>
</dbReference>
<dbReference type="FunFam" id="3.50.50.60:FF:000063">
    <property type="entry name" value="tRNA uridine 5-carboxymethylaminomethyl modification enzyme MnmG"/>
    <property type="match status" value="1"/>
</dbReference>
<dbReference type="Gene3D" id="3.50.50.60">
    <property type="entry name" value="FAD/NAD(P)-binding domain"/>
    <property type="match status" value="2"/>
</dbReference>
<dbReference type="Gene3D" id="1.10.150.570">
    <property type="entry name" value="GidA associated domain, C-terminal subdomain"/>
    <property type="match status" value="1"/>
</dbReference>
<dbReference type="Gene3D" id="1.10.10.1800">
    <property type="entry name" value="tRNA uridine 5-carboxymethylaminomethyl modification enzyme MnmG/GidA"/>
    <property type="match status" value="1"/>
</dbReference>
<dbReference type="HAMAP" id="MF_00129">
    <property type="entry name" value="MnmG_GidA"/>
    <property type="match status" value="1"/>
</dbReference>
<dbReference type="InterPro" id="IPR036188">
    <property type="entry name" value="FAD/NAD-bd_sf"/>
</dbReference>
<dbReference type="InterPro" id="IPR049312">
    <property type="entry name" value="GIDA_C_N"/>
</dbReference>
<dbReference type="InterPro" id="IPR004416">
    <property type="entry name" value="MnmG"/>
</dbReference>
<dbReference type="InterPro" id="IPR002218">
    <property type="entry name" value="MnmG-rel"/>
</dbReference>
<dbReference type="InterPro" id="IPR020595">
    <property type="entry name" value="MnmG-rel_CS"/>
</dbReference>
<dbReference type="InterPro" id="IPR026904">
    <property type="entry name" value="MnmG_C"/>
</dbReference>
<dbReference type="InterPro" id="IPR047001">
    <property type="entry name" value="MnmG_C_subdom"/>
</dbReference>
<dbReference type="InterPro" id="IPR044920">
    <property type="entry name" value="MnmG_C_subdom_sf"/>
</dbReference>
<dbReference type="InterPro" id="IPR040131">
    <property type="entry name" value="MnmG_N"/>
</dbReference>
<dbReference type="NCBIfam" id="TIGR00136">
    <property type="entry name" value="mnmG_gidA"/>
    <property type="match status" value="1"/>
</dbReference>
<dbReference type="PANTHER" id="PTHR11806">
    <property type="entry name" value="GLUCOSE INHIBITED DIVISION PROTEIN A"/>
    <property type="match status" value="1"/>
</dbReference>
<dbReference type="PANTHER" id="PTHR11806:SF0">
    <property type="entry name" value="PROTEIN MTO1 HOMOLOG, MITOCHONDRIAL"/>
    <property type="match status" value="1"/>
</dbReference>
<dbReference type="Pfam" id="PF01134">
    <property type="entry name" value="GIDA"/>
    <property type="match status" value="1"/>
</dbReference>
<dbReference type="Pfam" id="PF21680">
    <property type="entry name" value="GIDA_C_1st"/>
    <property type="match status" value="1"/>
</dbReference>
<dbReference type="Pfam" id="PF13932">
    <property type="entry name" value="SAM_GIDA_C"/>
    <property type="match status" value="1"/>
</dbReference>
<dbReference type="PRINTS" id="PR00368">
    <property type="entry name" value="FADPNR"/>
</dbReference>
<dbReference type="PRINTS" id="PR00411">
    <property type="entry name" value="PNDRDTASEI"/>
</dbReference>
<dbReference type="SMART" id="SM01228">
    <property type="entry name" value="GIDA_assoc_3"/>
    <property type="match status" value="1"/>
</dbReference>
<dbReference type="SUPFAM" id="SSF51905">
    <property type="entry name" value="FAD/NAD(P)-binding domain"/>
    <property type="match status" value="1"/>
</dbReference>
<dbReference type="PROSITE" id="PS01280">
    <property type="entry name" value="GIDA_1"/>
    <property type="match status" value="1"/>
</dbReference>
<dbReference type="PROSITE" id="PS01281">
    <property type="entry name" value="GIDA_2"/>
    <property type="match status" value="1"/>
</dbReference>
<evidence type="ECO:0000255" key="1">
    <source>
        <dbReference type="HAMAP-Rule" id="MF_00129"/>
    </source>
</evidence>
<proteinExistence type="inferred from homology"/>
<accession>B1YGA7</accession>
<protein>
    <recommendedName>
        <fullName evidence="1">tRNA uridine 5-carboxymethylaminomethyl modification enzyme MnmG</fullName>
    </recommendedName>
    <alternativeName>
        <fullName evidence="1">Glucose-inhibited division protein A</fullName>
    </alternativeName>
</protein>
<organism>
    <name type="scientific">Exiguobacterium sibiricum (strain DSM 17290 / CCUG 55495 / CIP 109462 / JCM 13490 / 255-15)</name>
    <dbReference type="NCBI Taxonomy" id="262543"/>
    <lineage>
        <taxon>Bacteria</taxon>
        <taxon>Bacillati</taxon>
        <taxon>Bacillota</taxon>
        <taxon>Bacilli</taxon>
        <taxon>Bacillales</taxon>
        <taxon>Bacillales Family XII. Incertae Sedis</taxon>
        <taxon>Exiguobacterium</taxon>
    </lineage>
</organism>
<gene>
    <name evidence="1" type="primary">mnmG</name>
    <name evidence="1" type="synonym">gidA</name>
    <name type="ordered locus">Exig_3046</name>
</gene>
<name>MNMG_EXIS2</name>
<comment type="function">
    <text evidence="1">NAD-binding protein involved in the addition of a carboxymethylaminomethyl (cmnm) group at the wobble position (U34) of certain tRNAs, forming tRNA-cmnm(5)s(2)U34.</text>
</comment>
<comment type="cofactor">
    <cofactor evidence="1">
        <name>FAD</name>
        <dbReference type="ChEBI" id="CHEBI:57692"/>
    </cofactor>
</comment>
<comment type="subunit">
    <text evidence="1">Homodimer. Heterotetramer of two MnmE and two MnmG subunits.</text>
</comment>
<comment type="subcellular location">
    <subcellularLocation>
        <location evidence="1">Cytoplasm</location>
    </subcellularLocation>
</comment>
<comment type="similarity">
    <text evidence="1">Belongs to the MnmG family.</text>
</comment>
<feature type="chain" id="PRO_0000345269" description="tRNA uridine 5-carboxymethylaminomethyl modification enzyme MnmG">
    <location>
        <begin position="1"/>
        <end position="628"/>
    </location>
</feature>
<feature type="binding site" evidence="1">
    <location>
        <begin position="14"/>
        <end position="19"/>
    </location>
    <ligand>
        <name>FAD</name>
        <dbReference type="ChEBI" id="CHEBI:57692"/>
    </ligand>
</feature>
<feature type="binding site" evidence="1">
    <location>
        <position position="126"/>
    </location>
    <ligand>
        <name>FAD</name>
        <dbReference type="ChEBI" id="CHEBI:57692"/>
    </ligand>
</feature>
<feature type="binding site" evidence="1">
    <location>
        <position position="181"/>
    </location>
    <ligand>
        <name>FAD</name>
        <dbReference type="ChEBI" id="CHEBI:57692"/>
    </ligand>
</feature>
<feature type="binding site" evidence="1">
    <location>
        <begin position="273"/>
        <end position="287"/>
    </location>
    <ligand>
        <name>NAD(+)</name>
        <dbReference type="ChEBI" id="CHEBI:57540"/>
    </ligand>
</feature>
<feature type="binding site" evidence="1">
    <location>
        <position position="370"/>
    </location>
    <ligand>
        <name>FAD</name>
        <dbReference type="ChEBI" id="CHEBI:57692"/>
    </ligand>
</feature>
<sequence>MAYQAGEFDVIVIGAGHAGIEASLAAARMGSKTVMLTMNPDMVGFMYCNPSIGGPAKGIVVREIDALGGEMARAIDATYIQMKMLNTSKGPAVRALRAQADKFEYQNRMKKALEDEPNLLLRQALVERLIIEDDTCVGVVTNTGAEYRAKAVIITTGTFMRGKIIIGELSYESGPNNQMPSVNLSKHLEELGFELARFKTGTPPRIDGKTIDYSKTEIQPGDAVALPFSHETTQMITEQIPCWLTYTTEYTHQLIDANLHRSPMFSGMIKGTGPRYCPSIEDKVVRFSDKPRHQIFLEPEGRDTEEVYVQGLSTSLPEDVQHDILRSIPGLEKSEMMRPGYAIEYDAVVPTQLWPTLETKRIAGLFTAGQINGTSGYEEAAGQGIMAGINAALKVQERDPLILSRSQGYIGVMIDDLVTKGTNEPYRLLTSRAEYRLLLRHDNADLRLSDIGYDLGLINETRHAKLAEKKEDIQREMKRLEKVVIKATSEVNERLTEIGVSPLKEALHAITLLKRPEITYAMIADMTPPPVALSEEAAEQVEIQVKYAGYIDKQLDQVERMMRMEKKRIPERLDYDVISGLAIEAKQKLNQVRPLSIGQASRISGVNPSDISILLVYIEQGQYALTAE</sequence>
<reference key="1">
    <citation type="submission" date="2008-04" db="EMBL/GenBank/DDBJ databases">
        <title>Complete sequence of chromosome of Exiguobacterium sibiricum 255-15.</title>
        <authorList>
            <consortium name="US DOE Joint Genome Institute"/>
            <person name="Copeland A."/>
            <person name="Lucas S."/>
            <person name="Lapidus A."/>
            <person name="Glavina del Rio T."/>
            <person name="Dalin E."/>
            <person name="Tice H."/>
            <person name="Bruce D."/>
            <person name="Goodwin L."/>
            <person name="Pitluck S."/>
            <person name="Kiss H."/>
            <person name="Chertkov O."/>
            <person name="Monk C."/>
            <person name="Brettin T."/>
            <person name="Detter J.C."/>
            <person name="Han C."/>
            <person name="Kuske C.R."/>
            <person name="Schmutz J."/>
            <person name="Larimer F."/>
            <person name="Land M."/>
            <person name="Hauser L."/>
            <person name="Kyrpides N."/>
            <person name="Mikhailova N."/>
            <person name="Vishnivetskaya T."/>
            <person name="Rodrigues D.F."/>
            <person name="Gilichinsky D."/>
            <person name="Tiedje J."/>
            <person name="Richardson P."/>
        </authorList>
    </citation>
    <scope>NUCLEOTIDE SEQUENCE [LARGE SCALE GENOMIC DNA]</scope>
    <source>
        <strain>DSM 17290 / CCUG 55495 / CIP 109462 / JCM 13490 / 255-15</strain>
    </source>
</reference>